<keyword id="KW-0281">Fimbrium</keyword>
<keyword id="KW-0732">Signal</keyword>
<sequence>MKNKLLFMMLTILGAPGIATATNYDLARSEYNFAVNELSKSSFNQAAIIGQVGTDNSARVRQEGSKLLSVISQEGENNRAKVDQAGNYNFAYIEQTGNANDASISQSAYGNSAAIIQKGSGNKANITQYGTQKTAVVVQKQSHMAIRVTQR</sequence>
<comment type="function">
    <text>Curlin is the structural subunit of the curli. Curli are coiled surface structures that assemble preferentially at growth temperatures below 37 degrees Celsius. Curli can bind to fibronectin. The minor subunit is the nucleation component of curlin monomers.</text>
</comment>
<comment type="subcellular location">
    <subcellularLocation>
        <location>Fimbrium</location>
    </subcellularLocation>
    <text>Part of the curli surface structure.</text>
</comment>
<comment type="similarity">
    <text evidence="2">Belongs to the CsgA/CsgB family.</text>
</comment>
<organism>
    <name type="scientific">Salmonella typhi</name>
    <dbReference type="NCBI Taxonomy" id="90370"/>
    <lineage>
        <taxon>Bacteria</taxon>
        <taxon>Pseudomonadati</taxon>
        <taxon>Pseudomonadota</taxon>
        <taxon>Gammaproteobacteria</taxon>
        <taxon>Enterobacterales</taxon>
        <taxon>Enterobacteriaceae</taxon>
        <taxon>Salmonella</taxon>
    </lineage>
</organism>
<proteinExistence type="inferred from homology"/>
<feature type="signal peptide" evidence="1">
    <location>
        <begin position="1"/>
        <end position="21"/>
    </location>
</feature>
<feature type="chain" id="PRO_0000006376" description="Minor curlin subunit">
    <location>
        <begin position="22"/>
        <end position="151"/>
    </location>
</feature>
<reference key="1">
    <citation type="journal article" date="2001" name="Nature">
        <title>Complete genome sequence of a multiple drug resistant Salmonella enterica serovar Typhi CT18.</title>
        <authorList>
            <person name="Parkhill J."/>
            <person name="Dougan G."/>
            <person name="James K.D."/>
            <person name="Thomson N.R."/>
            <person name="Pickard D."/>
            <person name="Wain J."/>
            <person name="Churcher C.M."/>
            <person name="Mungall K.L."/>
            <person name="Bentley S.D."/>
            <person name="Holden M.T.G."/>
            <person name="Sebaihia M."/>
            <person name="Baker S."/>
            <person name="Basham D."/>
            <person name="Brooks K."/>
            <person name="Chillingworth T."/>
            <person name="Connerton P."/>
            <person name="Cronin A."/>
            <person name="Davis P."/>
            <person name="Davies R.M."/>
            <person name="Dowd L."/>
            <person name="White N."/>
            <person name="Farrar J."/>
            <person name="Feltwell T."/>
            <person name="Hamlin N."/>
            <person name="Haque A."/>
            <person name="Hien T.T."/>
            <person name="Holroyd S."/>
            <person name="Jagels K."/>
            <person name="Krogh A."/>
            <person name="Larsen T.S."/>
            <person name="Leather S."/>
            <person name="Moule S."/>
            <person name="O'Gaora P."/>
            <person name="Parry C."/>
            <person name="Quail M.A."/>
            <person name="Rutherford K.M."/>
            <person name="Simmonds M."/>
            <person name="Skelton J."/>
            <person name="Stevens K."/>
            <person name="Whitehead S."/>
            <person name="Barrell B.G."/>
        </authorList>
    </citation>
    <scope>NUCLEOTIDE SEQUENCE [LARGE SCALE GENOMIC DNA]</scope>
    <source>
        <strain>CT18</strain>
    </source>
</reference>
<reference key="2">
    <citation type="journal article" date="2003" name="J. Bacteriol.">
        <title>Comparative genomics of Salmonella enterica serovar Typhi strains Ty2 and CT18.</title>
        <authorList>
            <person name="Deng W."/>
            <person name="Liou S.-R."/>
            <person name="Plunkett G. III"/>
            <person name="Mayhew G.F."/>
            <person name="Rose D.J."/>
            <person name="Burland V."/>
            <person name="Kodoyianni V."/>
            <person name="Schwartz D.C."/>
            <person name="Blattner F.R."/>
        </authorList>
    </citation>
    <scope>NUCLEOTIDE SEQUENCE [LARGE SCALE GENOMIC DNA]</scope>
    <source>
        <strain>ATCC 700931 / Ty2</strain>
    </source>
</reference>
<protein>
    <recommendedName>
        <fullName>Minor curlin subunit</fullName>
    </recommendedName>
</protein>
<gene>
    <name type="primary">csgB</name>
    <name type="ordered locus">STY1180</name>
    <name type="ordered locus">t1777</name>
</gene>
<name>CSGB_SALTI</name>
<dbReference type="EMBL" id="AL513382">
    <property type="protein sequence ID" value="CAD08267.1"/>
    <property type="molecule type" value="Genomic_DNA"/>
</dbReference>
<dbReference type="EMBL" id="AE014613">
    <property type="protein sequence ID" value="AAO69400.1"/>
    <property type="molecule type" value="Genomic_DNA"/>
</dbReference>
<dbReference type="RefSeq" id="NP_455637.1">
    <property type="nucleotide sequence ID" value="NC_003198.1"/>
</dbReference>
<dbReference type="RefSeq" id="WP_000791653.1">
    <property type="nucleotide sequence ID" value="NZ_WSUR01000018.1"/>
</dbReference>
<dbReference type="SMR" id="Q8Z7M3"/>
<dbReference type="STRING" id="220341.gene:17585147"/>
<dbReference type="KEGG" id="stt:t1777"/>
<dbReference type="KEGG" id="sty:STY1180"/>
<dbReference type="PATRIC" id="fig|220341.7.peg.1180"/>
<dbReference type="eggNOG" id="ENOG5033BC9">
    <property type="taxonomic scope" value="Bacteria"/>
</dbReference>
<dbReference type="HOGENOM" id="CLU_116264_1_0_6"/>
<dbReference type="OMA" id="NFGNTAY"/>
<dbReference type="OrthoDB" id="6609492at2"/>
<dbReference type="Proteomes" id="UP000000541">
    <property type="component" value="Chromosome"/>
</dbReference>
<dbReference type="Proteomes" id="UP000002670">
    <property type="component" value="Chromosome"/>
</dbReference>
<dbReference type="GO" id="GO:0009289">
    <property type="term" value="C:pilus"/>
    <property type="evidence" value="ECO:0007669"/>
    <property type="project" value="UniProtKB-SubCell"/>
</dbReference>
<dbReference type="GO" id="GO:0007155">
    <property type="term" value="P:cell adhesion"/>
    <property type="evidence" value="ECO:0007669"/>
    <property type="project" value="InterPro"/>
</dbReference>
<dbReference type="InterPro" id="IPR009742">
    <property type="entry name" value="Curlin_rpt"/>
</dbReference>
<dbReference type="NCBIfam" id="NF007506">
    <property type="entry name" value="PRK10101.1"/>
    <property type="match status" value="1"/>
</dbReference>
<dbReference type="Pfam" id="PF07012">
    <property type="entry name" value="Curlin_rpt"/>
    <property type="match status" value="3"/>
</dbReference>
<accession>Q8Z7M3</accession>
<evidence type="ECO:0000255" key="1"/>
<evidence type="ECO:0000305" key="2"/>